<protein>
    <recommendedName>
        <fullName evidence="1">GMP reductase</fullName>
        <ecNumber evidence="1">1.7.1.7</ecNumber>
    </recommendedName>
    <alternativeName>
        <fullName evidence="1">Guanosine 5'-monophosphate oxidoreductase</fullName>
        <shortName evidence="1">Guanosine monophosphate reductase</shortName>
    </alternativeName>
</protein>
<name>GUAC_LACAC</name>
<proteinExistence type="inferred from homology"/>
<evidence type="ECO:0000255" key="1">
    <source>
        <dbReference type="HAMAP-Rule" id="MF_01511"/>
    </source>
</evidence>
<accession>Q5FHY3</accession>
<feature type="chain" id="PRO_0000093758" description="GMP reductase">
    <location>
        <begin position="1"/>
        <end position="330"/>
    </location>
</feature>
<feature type="active site" description="Thioimidate intermediate" evidence="1">
    <location>
        <position position="180"/>
    </location>
</feature>
<feature type="binding site" evidence="1">
    <location>
        <begin position="209"/>
        <end position="232"/>
    </location>
    <ligand>
        <name>NADP(+)</name>
        <dbReference type="ChEBI" id="CHEBI:58349"/>
    </ligand>
</feature>
<reference key="1">
    <citation type="journal article" date="2005" name="Proc. Natl. Acad. Sci. U.S.A.">
        <title>Complete genome sequence of the probiotic lactic acid bacterium Lactobacillus acidophilus NCFM.</title>
        <authorList>
            <person name="Altermann E."/>
            <person name="Russell W.M."/>
            <person name="Azcarate-Peril M.A."/>
            <person name="Barrangou R."/>
            <person name="Buck B.L."/>
            <person name="McAuliffe O."/>
            <person name="Souther N."/>
            <person name="Dobson A."/>
            <person name="Duong T."/>
            <person name="Callanan M."/>
            <person name="Lick S."/>
            <person name="Hamrick A."/>
            <person name="Cano R."/>
            <person name="Klaenhammer T.R."/>
        </authorList>
    </citation>
    <scope>NUCLEOTIDE SEQUENCE [LARGE SCALE GENOMIC DNA]</scope>
    <source>
        <strain>ATCC 700396 / NCK56 / N2 / NCFM</strain>
    </source>
</reference>
<comment type="function">
    <text evidence="1">Catalyzes the irreversible NADPH-dependent deamination of GMP to IMP. It functions in the conversion of nucleobase, nucleoside and nucleotide derivatives of G to A nucleotides, and in maintaining the intracellular balance of A and G nucleotides.</text>
</comment>
<comment type="catalytic activity">
    <reaction evidence="1">
        <text>IMP + NH4(+) + NADP(+) = GMP + NADPH + 2 H(+)</text>
        <dbReference type="Rhea" id="RHEA:17185"/>
        <dbReference type="ChEBI" id="CHEBI:15378"/>
        <dbReference type="ChEBI" id="CHEBI:28938"/>
        <dbReference type="ChEBI" id="CHEBI:57783"/>
        <dbReference type="ChEBI" id="CHEBI:58053"/>
        <dbReference type="ChEBI" id="CHEBI:58115"/>
        <dbReference type="ChEBI" id="CHEBI:58349"/>
        <dbReference type="EC" id="1.7.1.7"/>
    </reaction>
</comment>
<comment type="similarity">
    <text evidence="1">Belongs to the IMPDH/GMPR family. GuaC type 2 subfamily.</text>
</comment>
<sequence length="330" mass="36657">MSNYFSMEAFDYDDIQLIPNKGIIKSRRDADTSVKFGNRTFKIPVVPANMESVIDDKLAVWLAENDYYYVMHRFEPEKRIPFIKMMHEKGLFASISVGIKDSEYDFIDELVKQNLKPEYITIDVAHGHSVYVIKMIKYIKEKLPNSFLTAGNIATPEAVRELENAGADATKVGVGPGKACITKLKTGFGTGGWQLAALRMCSKVASKPLIADGGIRHNGDIAKSVRFGASMVMIGSMLAGHEESPGNVIKIDGKTFKQYWGSASEVQKGAYKNVEGKQMLVPYRGSIKDTLREMQEDLQSAISYAGGRELNSIKLVDYVIVKDNIFDGDK</sequence>
<gene>
    <name evidence="1" type="primary">guaC</name>
    <name type="ordered locus">LBA1893</name>
</gene>
<keyword id="KW-0521">NADP</keyword>
<keyword id="KW-0560">Oxidoreductase</keyword>
<keyword id="KW-1185">Reference proteome</keyword>
<organism>
    <name type="scientific">Lactobacillus acidophilus (strain ATCC 700396 / NCK56 / N2 / NCFM)</name>
    <dbReference type="NCBI Taxonomy" id="272621"/>
    <lineage>
        <taxon>Bacteria</taxon>
        <taxon>Bacillati</taxon>
        <taxon>Bacillota</taxon>
        <taxon>Bacilli</taxon>
        <taxon>Lactobacillales</taxon>
        <taxon>Lactobacillaceae</taxon>
        <taxon>Lactobacillus</taxon>
    </lineage>
</organism>
<dbReference type="EC" id="1.7.1.7" evidence="1"/>
<dbReference type="EMBL" id="CP000033">
    <property type="protein sequence ID" value="AAV43691.1"/>
    <property type="molecule type" value="Genomic_DNA"/>
</dbReference>
<dbReference type="RefSeq" id="WP_011254608.1">
    <property type="nucleotide sequence ID" value="NC_006814.3"/>
</dbReference>
<dbReference type="RefSeq" id="YP_194722.1">
    <property type="nucleotide sequence ID" value="NC_006814.3"/>
</dbReference>
<dbReference type="SMR" id="Q5FHY3"/>
<dbReference type="STRING" id="272621.LBA1893"/>
<dbReference type="KEGG" id="lac:LBA1893"/>
<dbReference type="PATRIC" id="fig|272621.13.peg.1799"/>
<dbReference type="eggNOG" id="COG0516">
    <property type="taxonomic scope" value="Bacteria"/>
</dbReference>
<dbReference type="HOGENOM" id="CLU_022552_5_0_9"/>
<dbReference type="OrthoDB" id="9805398at2"/>
<dbReference type="BioCyc" id="LACI272621:G1G49-1845-MONOMER"/>
<dbReference type="Proteomes" id="UP000006381">
    <property type="component" value="Chromosome"/>
</dbReference>
<dbReference type="GO" id="GO:0005829">
    <property type="term" value="C:cytosol"/>
    <property type="evidence" value="ECO:0007669"/>
    <property type="project" value="TreeGrafter"/>
</dbReference>
<dbReference type="GO" id="GO:1902560">
    <property type="term" value="C:GMP reductase complex"/>
    <property type="evidence" value="ECO:0007669"/>
    <property type="project" value="InterPro"/>
</dbReference>
<dbReference type="GO" id="GO:0003920">
    <property type="term" value="F:GMP reductase activity"/>
    <property type="evidence" value="ECO:0007669"/>
    <property type="project" value="UniProtKB-UniRule"/>
</dbReference>
<dbReference type="GO" id="GO:0006163">
    <property type="term" value="P:purine nucleotide metabolic process"/>
    <property type="evidence" value="ECO:0007669"/>
    <property type="project" value="UniProtKB-UniRule"/>
</dbReference>
<dbReference type="CDD" id="cd00381">
    <property type="entry name" value="IMPDH"/>
    <property type="match status" value="1"/>
</dbReference>
<dbReference type="FunFam" id="3.20.20.70:FF:000424">
    <property type="entry name" value="Inosine-5'-monophosphate dehydrogenase 2"/>
    <property type="match status" value="1"/>
</dbReference>
<dbReference type="Gene3D" id="3.20.20.70">
    <property type="entry name" value="Aldolase class I"/>
    <property type="match status" value="1"/>
</dbReference>
<dbReference type="HAMAP" id="MF_01511">
    <property type="entry name" value="GMP_reduct_type2"/>
    <property type="match status" value="1"/>
</dbReference>
<dbReference type="InterPro" id="IPR013785">
    <property type="entry name" value="Aldolase_TIM"/>
</dbReference>
<dbReference type="InterPro" id="IPR050139">
    <property type="entry name" value="GMP_reductase"/>
</dbReference>
<dbReference type="InterPro" id="IPR005994">
    <property type="entry name" value="GuaC_type_2"/>
</dbReference>
<dbReference type="InterPro" id="IPR015875">
    <property type="entry name" value="IMP_DH/GMP_Rdtase_CS"/>
</dbReference>
<dbReference type="InterPro" id="IPR001093">
    <property type="entry name" value="IMP_DH_GMPRt"/>
</dbReference>
<dbReference type="NCBIfam" id="TIGR01306">
    <property type="entry name" value="GMP_reduct_2"/>
    <property type="match status" value="1"/>
</dbReference>
<dbReference type="NCBIfam" id="NF003966">
    <property type="entry name" value="PRK05458.1"/>
    <property type="match status" value="1"/>
</dbReference>
<dbReference type="PANTHER" id="PTHR43170">
    <property type="entry name" value="GMP REDUCTASE"/>
    <property type="match status" value="1"/>
</dbReference>
<dbReference type="PANTHER" id="PTHR43170:SF5">
    <property type="entry name" value="GMP REDUCTASE"/>
    <property type="match status" value="1"/>
</dbReference>
<dbReference type="Pfam" id="PF00478">
    <property type="entry name" value="IMPDH"/>
    <property type="match status" value="1"/>
</dbReference>
<dbReference type="PIRSF" id="PIRSF036500">
    <property type="entry name" value="GMP_red_Firmic"/>
    <property type="match status" value="1"/>
</dbReference>
<dbReference type="SMART" id="SM01240">
    <property type="entry name" value="IMPDH"/>
    <property type="match status" value="1"/>
</dbReference>
<dbReference type="SUPFAM" id="SSF51412">
    <property type="entry name" value="Inosine monophosphate dehydrogenase (IMPDH)"/>
    <property type="match status" value="1"/>
</dbReference>
<dbReference type="PROSITE" id="PS00487">
    <property type="entry name" value="IMP_DH_GMP_RED"/>
    <property type="match status" value="1"/>
</dbReference>